<feature type="chain" id="PRO_0000125029" description="Large ribosomal subunit protein uL5">
    <location>
        <begin position="1"/>
        <end position="180"/>
    </location>
</feature>
<keyword id="KW-0687">Ribonucleoprotein</keyword>
<keyword id="KW-0689">Ribosomal protein</keyword>
<keyword id="KW-0694">RNA-binding</keyword>
<keyword id="KW-0699">rRNA-binding</keyword>
<keyword id="KW-0820">tRNA-binding</keyword>
<reference key="1">
    <citation type="journal article" date="2002" name="Nature">
        <title>Comparison of the genomes of two Xanthomonas pathogens with differing host specificities.</title>
        <authorList>
            <person name="da Silva A.C.R."/>
            <person name="Ferro J.A."/>
            <person name="Reinach F.C."/>
            <person name="Farah C.S."/>
            <person name="Furlan L.R."/>
            <person name="Quaggio R.B."/>
            <person name="Monteiro-Vitorello C.B."/>
            <person name="Van Sluys M.A."/>
            <person name="Almeida N.F. Jr."/>
            <person name="Alves L.M.C."/>
            <person name="do Amaral A.M."/>
            <person name="Bertolini M.C."/>
            <person name="Camargo L.E.A."/>
            <person name="Camarotte G."/>
            <person name="Cannavan F."/>
            <person name="Cardozo J."/>
            <person name="Chambergo F."/>
            <person name="Ciapina L.P."/>
            <person name="Cicarelli R.M.B."/>
            <person name="Coutinho L.L."/>
            <person name="Cursino-Santos J.R."/>
            <person name="El-Dorry H."/>
            <person name="Faria J.B."/>
            <person name="Ferreira A.J.S."/>
            <person name="Ferreira R.C.C."/>
            <person name="Ferro M.I.T."/>
            <person name="Formighieri E.F."/>
            <person name="Franco M.C."/>
            <person name="Greggio C.C."/>
            <person name="Gruber A."/>
            <person name="Katsuyama A.M."/>
            <person name="Kishi L.T."/>
            <person name="Leite R.P."/>
            <person name="Lemos E.G.M."/>
            <person name="Lemos M.V.F."/>
            <person name="Locali E.C."/>
            <person name="Machado M.A."/>
            <person name="Madeira A.M.B.N."/>
            <person name="Martinez-Rossi N.M."/>
            <person name="Martins E.C."/>
            <person name="Meidanis J."/>
            <person name="Menck C.F.M."/>
            <person name="Miyaki C.Y."/>
            <person name="Moon D.H."/>
            <person name="Moreira L.M."/>
            <person name="Novo M.T.M."/>
            <person name="Okura V.K."/>
            <person name="Oliveira M.C."/>
            <person name="Oliveira V.R."/>
            <person name="Pereira H.A."/>
            <person name="Rossi A."/>
            <person name="Sena J.A.D."/>
            <person name="Silva C."/>
            <person name="de Souza R.F."/>
            <person name="Spinola L.A.F."/>
            <person name="Takita M.A."/>
            <person name="Tamura R.E."/>
            <person name="Teixeira E.C."/>
            <person name="Tezza R.I.D."/>
            <person name="Trindade dos Santos M."/>
            <person name="Truffi D."/>
            <person name="Tsai S.M."/>
            <person name="White F.F."/>
            <person name="Setubal J.C."/>
            <person name="Kitajima J.P."/>
        </authorList>
    </citation>
    <scope>NUCLEOTIDE SEQUENCE [LARGE SCALE GENOMIC DNA]</scope>
    <source>
        <strain>306</strain>
    </source>
</reference>
<comment type="function">
    <text evidence="1">This is one of the proteins that bind and probably mediate the attachment of the 5S RNA into the large ribosomal subunit, where it forms part of the central protuberance. In the 70S ribosome it contacts protein S13 of the 30S subunit (bridge B1b), connecting the 2 subunits; this bridge is implicated in subunit movement. Contacts the P site tRNA; the 5S rRNA and some of its associated proteins might help stabilize positioning of ribosome-bound tRNAs.</text>
</comment>
<comment type="subunit">
    <text evidence="1">Part of the 50S ribosomal subunit; part of the 5S rRNA/L5/L18/L25 subcomplex. Contacts the 5S rRNA and the P site tRNA. Forms a bridge to the 30S subunit in the 70S ribosome.</text>
</comment>
<comment type="similarity">
    <text evidence="1">Belongs to the universal ribosomal protein uL5 family.</text>
</comment>
<organism>
    <name type="scientific">Xanthomonas axonopodis pv. citri (strain 306)</name>
    <dbReference type="NCBI Taxonomy" id="190486"/>
    <lineage>
        <taxon>Bacteria</taxon>
        <taxon>Pseudomonadati</taxon>
        <taxon>Pseudomonadota</taxon>
        <taxon>Gammaproteobacteria</taxon>
        <taxon>Lysobacterales</taxon>
        <taxon>Lysobacteraceae</taxon>
        <taxon>Xanthomonas</taxon>
    </lineage>
</organism>
<dbReference type="EMBL" id="AE008923">
    <property type="protein sequence ID" value="AAM35867.1"/>
    <property type="molecule type" value="Genomic_DNA"/>
</dbReference>
<dbReference type="RefSeq" id="WP_003486694.1">
    <property type="nucleotide sequence ID" value="NC_003919.1"/>
</dbReference>
<dbReference type="SMR" id="Q8PNR4"/>
<dbReference type="GeneID" id="66910170"/>
<dbReference type="KEGG" id="xac:XAC0984"/>
<dbReference type="eggNOG" id="COG0094">
    <property type="taxonomic scope" value="Bacteria"/>
</dbReference>
<dbReference type="HOGENOM" id="CLU_061015_2_1_6"/>
<dbReference type="Proteomes" id="UP000000576">
    <property type="component" value="Chromosome"/>
</dbReference>
<dbReference type="GO" id="GO:1990904">
    <property type="term" value="C:ribonucleoprotein complex"/>
    <property type="evidence" value="ECO:0007669"/>
    <property type="project" value="UniProtKB-KW"/>
</dbReference>
<dbReference type="GO" id="GO:0005840">
    <property type="term" value="C:ribosome"/>
    <property type="evidence" value="ECO:0007669"/>
    <property type="project" value="UniProtKB-KW"/>
</dbReference>
<dbReference type="GO" id="GO:0019843">
    <property type="term" value="F:rRNA binding"/>
    <property type="evidence" value="ECO:0007669"/>
    <property type="project" value="UniProtKB-UniRule"/>
</dbReference>
<dbReference type="GO" id="GO:0003735">
    <property type="term" value="F:structural constituent of ribosome"/>
    <property type="evidence" value="ECO:0007669"/>
    <property type="project" value="InterPro"/>
</dbReference>
<dbReference type="GO" id="GO:0000049">
    <property type="term" value="F:tRNA binding"/>
    <property type="evidence" value="ECO:0007669"/>
    <property type="project" value="UniProtKB-UniRule"/>
</dbReference>
<dbReference type="GO" id="GO:0006412">
    <property type="term" value="P:translation"/>
    <property type="evidence" value="ECO:0007669"/>
    <property type="project" value="UniProtKB-UniRule"/>
</dbReference>
<dbReference type="FunFam" id="3.30.1440.10:FF:000001">
    <property type="entry name" value="50S ribosomal protein L5"/>
    <property type="match status" value="1"/>
</dbReference>
<dbReference type="Gene3D" id="3.30.1440.10">
    <property type="match status" value="1"/>
</dbReference>
<dbReference type="HAMAP" id="MF_01333_B">
    <property type="entry name" value="Ribosomal_uL5_B"/>
    <property type="match status" value="1"/>
</dbReference>
<dbReference type="InterPro" id="IPR002132">
    <property type="entry name" value="Ribosomal_uL5"/>
</dbReference>
<dbReference type="InterPro" id="IPR020930">
    <property type="entry name" value="Ribosomal_uL5_bac-type"/>
</dbReference>
<dbReference type="InterPro" id="IPR031309">
    <property type="entry name" value="Ribosomal_uL5_C"/>
</dbReference>
<dbReference type="InterPro" id="IPR020929">
    <property type="entry name" value="Ribosomal_uL5_CS"/>
</dbReference>
<dbReference type="InterPro" id="IPR022803">
    <property type="entry name" value="Ribosomal_uL5_dom_sf"/>
</dbReference>
<dbReference type="InterPro" id="IPR031310">
    <property type="entry name" value="Ribosomal_uL5_N"/>
</dbReference>
<dbReference type="NCBIfam" id="NF000585">
    <property type="entry name" value="PRK00010.1"/>
    <property type="match status" value="1"/>
</dbReference>
<dbReference type="PANTHER" id="PTHR11994">
    <property type="entry name" value="60S RIBOSOMAL PROTEIN L11-RELATED"/>
    <property type="match status" value="1"/>
</dbReference>
<dbReference type="Pfam" id="PF00281">
    <property type="entry name" value="Ribosomal_L5"/>
    <property type="match status" value="1"/>
</dbReference>
<dbReference type="Pfam" id="PF00673">
    <property type="entry name" value="Ribosomal_L5_C"/>
    <property type="match status" value="1"/>
</dbReference>
<dbReference type="PIRSF" id="PIRSF002161">
    <property type="entry name" value="Ribosomal_L5"/>
    <property type="match status" value="1"/>
</dbReference>
<dbReference type="SUPFAM" id="SSF55282">
    <property type="entry name" value="RL5-like"/>
    <property type="match status" value="1"/>
</dbReference>
<dbReference type="PROSITE" id="PS00358">
    <property type="entry name" value="RIBOSOMAL_L5"/>
    <property type="match status" value="1"/>
</dbReference>
<proteinExistence type="inferred from homology"/>
<evidence type="ECO:0000255" key="1">
    <source>
        <dbReference type="HAMAP-Rule" id="MF_01333"/>
    </source>
</evidence>
<evidence type="ECO:0000305" key="2"/>
<protein>
    <recommendedName>
        <fullName evidence="1">Large ribosomal subunit protein uL5</fullName>
    </recommendedName>
    <alternativeName>
        <fullName evidence="2">50S ribosomal protein L5</fullName>
    </alternativeName>
</protein>
<accession>Q8PNR4</accession>
<name>RL5_XANAC</name>
<sequence length="180" mass="20129">MNTRLEKFYKDNVVPALMKEFGYTNPMEVPKLVKVTLNMGVGEAATNKKILENAVADMAKISGQKPVVTKSRVSVASFKIRDGWPIGCKTTLRRAKMYEFLDRLINISLPRVRDFRGVSGRSFDGRGNFNMGVKEQIIFPEIDFDAVDAIRGMDIAITTTAKTDAEAKALLAAFKFPFRN</sequence>
<gene>
    <name evidence="1" type="primary">rplE</name>
    <name type="ordered locus">XAC0984</name>
</gene>